<evidence type="ECO:0000255" key="1">
    <source>
        <dbReference type="HAMAP-Rule" id="MF_00639"/>
    </source>
</evidence>
<evidence type="ECO:0000305" key="2"/>
<name>MURD_VIBC3</name>
<accession>A5F5N1</accession>
<accession>C3M4C5</accession>
<keyword id="KW-0067">ATP-binding</keyword>
<keyword id="KW-0131">Cell cycle</keyword>
<keyword id="KW-0132">Cell division</keyword>
<keyword id="KW-0133">Cell shape</keyword>
<keyword id="KW-0961">Cell wall biogenesis/degradation</keyword>
<keyword id="KW-0963">Cytoplasm</keyword>
<keyword id="KW-0436">Ligase</keyword>
<keyword id="KW-0547">Nucleotide-binding</keyword>
<keyword id="KW-0573">Peptidoglycan synthesis</keyword>
<proteinExistence type="inferred from homology"/>
<organism>
    <name type="scientific">Vibrio cholerae serotype O1 (strain ATCC 39541 / Classical Ogawa 395 / O395)</name>
    <dbReference type="NCBI Taxonomy" id="345073"/>
    <lineage>
        <taxon>Bacteria</taxon>
        <taxon>Pseudomonadati</taxon>
        <taxon>Pseudomonadota</taxon>
        <taxon>Gammaproteobacteria</taxon>
        <taxon>Vibrionales</taxon>
        <taxon>Vibrionaceae</taxon>
        <taxon>Vibrio</taxon>
    </lineage>
</organism>
<dbReference type="EC" id="6.3.2.9" evidence="1"/>
<dbReference type="EMBL" id="CP000627">
    <property type="protein sequence ID" value="ABQ21124.1"/>
    <property type="molecule type" value="Genomic_DNA"/>
</dbReference>
<dbReference type="EMBL" id="CP001235">
    <property type="protein sequence ID" value="ACP10507.1"/>
    <property type="status" value="ALT_INIT"/>
    <property type="molecule type" value="Genomic_DNA"/>
</dbReference>
<dbReference type="RefSeq" id="WP_000376400.1">
    <property type="nucleotide sequence ID" value="NZ_JAACZH010000010.1"/>
</dbReference>
<dbReference type="SMR" id="A5F5N1"/>
<dbReference type="KEGG" id="vco:VC0395_A1981"/>
<dbReference type="KEGG" id="vcr:VC395_2518"/>
<dbReference type="PATRIC" id="fig|345073.21.peg.2422"/>
<dbReference type="eggNOG" id="COG0771">
    <property type="taxonomic scope" value="Bacteria"/>
</dbReference>
<dbReference type="HOGENOM" id="CLU_032540_1_0_6"/>
<dbReference type="UniPathway" id="UPA00219"/>
<dbReference type="Proteomes" id="UP000000249">
    <property type="component" value="Chromosome 2"/>
</dbReference>
<dbReference type="GO" id="GO:0005737">
    <property type="term" value="C:cytoplasm"/>
    <property type="evidence" value="ECO:0007669"/>
    <property type="project" value="UniProtKB-SubCell"/>
</dbReference>
<dbReference type="GO" id="GO:0005524">
    <property type="term" value="F:ATP binding"/>
    <property type="evidence" value="ECO:0007669"/>
    <property type="project" value="UniProtKB-UniRule"/>
</dbReference>
<dbReference type="GO" id="GO:0008764">
    <property type="term" value="F:UDP-N-acetylmuramoylalanine-D-glutamate ligase activity"/>
    <property type="evidence" value="ECO:0007669"/>
    <property type="project" value="UniProtKB-UniRule"/>
</dbReference>
<dbReference type="GO" id="GO:0051301">
    <property type="term" value="P:cell division"/>
    <property type="evidence" value="ECO:0007669"/>
    <property type="project" value="UniProtKB-KW"/>
</dbReference>
<dbReference type="GO" id="GO:0071555">
    <property type="term" value="P:cell wall organization"/>
    <property type="evidence" value="ECO:0007669"/>
    <property type="project" value="UniProtKB-KW"/>
</dbReference>
<dbReference type="GO" id="GO:0009252">
    <property type="term" value="P:peptidoglycan biosynthetic process"/>
    <property type="evidence" value="ECO:0007669"/>
    <property type="project" value="UniProtKB-UniRule"/>
</dbReference>
<dbReference type="GO" id="GO:0008360">
    <property type="term" value="P:regulation of cell shape"/>
    <property type="evidence" value="ECO:0007669"/>
    <property type="project" value="UniProtKB-KW"/>
</dbReference>
<dbReference type="Gene3D" id="3.90.190.20">
    <property type="entry name" value="Mur ligase, C-terminal domain"/>
    <property type="match status" value="1"/>
</dbReference>
<dbReference type="Gene3D" id="3.40.1190.10">
    <property type="entry name" value="Mur-like, catalytic domain"/>
    <property type="match status" value="1"/>
</dbReference>
<dbReference type="Gene3D" id="3.40.50.720">
    <property type="entry name" value="NAD(P)-binding Rossmann-like Domain"/>
    <property type="match status" value="1"/>
</dbReference>
<dbReference type="HAMAP" id="MF_00639">
    <property type="entry name" value="MurD"/>
    <property type="match status" value="1"/>
</dbReference>
<dbReference type="InterPro" id="IPR036565">
    <property type="entry name" value="Mur-like_cat_sf"/>
</dbReference>
<dbReference type="InterPro" id="IPR004101">
    <property type="entry name" value="Mur_ligase_C"/>
</dbReference>
<dbReference type="InterPro" id="IPR036615">
    <property type="entry name" value="Mur_ligase_C_dom_sf"/>
</dbReference>
<dbReference type="InterPro" id="IPR013221">
    <property type="entry name" value="Mur_ligase_cen"/>
</dbReference>
<dbReference type="InterPro" id="IPR005762">
    <property type="entry name" value="MurD"/>
</dbReference>
<dbReference type="NCBIfam" id="TIGR01087">
    <property type="entry name" value="murD"/>
    <property type="match status" value="1"/>
</dbReference>
<dbReference type="PANTHER" id="PTHR43692">
    <property type="entry name" value="UDP-N-ACETYLMURAMOYLALANINE--D-GLUTAMATE LIGASE"/>
    <property type="match status" value="1"/>
</dbReference>
<dbReference type="PANTHER" id="PTHR43692:SF1">
    <property type="entry name" value="UDP-N-ACETYLMURAMOYLALANINE--D-GLUTAMATE LIGASE"/>
    <property type="match status" value="1"/>
</dbReference>
<dbReference type="Pfam" id="PF02875">
    <property type="entry name" value="Mur_ligase_C"/>
    <property type="match status" value="1"/>
</dbReference>
<dbReference type="Pfam" id="PF08245">
    <property type="entry name" value="Mur_ligase_M"/>
    <property type="match status" value="1"/>
</dbReference>
<dbReference type="Pfam" id="PF21799">
    <property type="entry name" value="MurD-like_N"/>
    <property type="match status" value="1"/>
</dbReference>
<dbReference type="SUPFAM" id="SSF51984">
    <property type="entry name" value="MurCD N-terminal domain"/>
    <property type="match status" value="1"/>
</dbReference>
<dbReference type="SUPFAM" id="SSF53623">
    <property type="entry name" value="MurD-like peptide ligases, catalytic domain"/>
    <property type="match status" value="1"/>
</dbReference>
<dbReference type="SUPFAM" id="SSF53244">
    <property type="entry name" value="MurD-like peptide ligases, peptide-binding domain"/>
    <property type="match status" value="1"/>
</dbReference>
<protein>
    <recommendedName>
        <fullName evidence="1">UDP-N-acetylmuramoylalanine--D-glutamate ligase</fullName>
        <ecNumber evidence="1">6.3.2.9</ecNumber>
    </recommendedName>
    <alternativeName>
        <fullName evidence="1">D-glutamic acid-adding enzyme</fullName>
    </alternativeName>
    <alternativeName>
        <fullName evidence="1">UDP-N-acetylmuramoyl-L-alanyl-D-glutamate synthetase</fullName>
    </alternativeName>
</protein>
<gene>
    <name evidence="1" type="primary">murD</name>
    <name type="ordered locus">VC0395_A1981</name>
    <name type="ordered locus">VC395_2518</name>
</gene>
<sequence>MDRWQGIQHVVVVGLGITGLSVVNYLRKYHPSVTVQVIDTREIPPGQEQLSSDVALHRGGWNLEWLLNADLVVTNPGIALATPEIQQVLAAGIPVVGDIELFAWHVDTPVIAITGSNGKSTVTDLSGVLANAAGVKAAVGGNIGVPALDLISPDVELYVLELSSFQLETTSSLKLKAAAFLNLSEDHMDRYQGMGDYRQAKLRIFDHAETAVVNADDTQTFPDHAAHLQVVTFGVEQAAQFSLAQHQGREYLFARDEAVMACAELSLVGRHNVTNVLTVLALLDSAGVNFRLALDALKSYTGLTHRCQVVADNHGIKWVNDSKATNVASTLAALSGLKIEGQLYLLVGGVGKGADFTPLAPVLATLPVQLCCFGVDGHQFMPLHPSARFYDSMESIIRSIRPQLKSGDMVLLSPACASFDQFKNFMARGDIFAQLARQYA</sequence>
<feature type="chain" id="PRO_1000072685" description="UDP-N-acetylmuramoylalanine--D-glutamate ligase">
    <location>
        <begin position="1"/>
        <end position="440"/>
    </location>
</feature>
<feature type="binding site" evidence="1">
    <location>
        <begin position="115"/>
        <end position="121"/>
    </location>
    <ligand>
        <name>ATP</name>
        <dbReference type="ChEBI" id="CHEBI:30616"/>
    </ligand>
</feature>
<comment type="function">
    <text evidence="1">Cell wall formation. Catalyzes the addition of glutamate to the nucleotide precursor UDP-N-acetylmuramoyl-L-alanine (UMA).</text>
</comment>
<comment type="catalytic activity">
    <reaction evidence="1">
        <text>UDP-N-acetyl-alpha-D-muramoyl-L-alanine + D-glutamate + ATP = UDP-N-acetyl-alpha-D-muramoyl-L-alanyl-D-glutamate + ADP + phosphate + H(+)</text>
        <dbReference type="Rhea" id="RHEA:16429"/>
        <dbReference type="ChEBI" id="CHEBI:15378"/>
        <dbReference type="ChEBI" id="CHEBI:29986"/>
        <dbReference type="ChEBI" id="CHEBI:30616"/>
        <dbReference type="ChEBI" id="CHEBI:43474"/>
        <dbReference type="ChEBI" id="CHEBI:83898"/>
        <dbReference type="ChEBI" id="CHEBI:83900"/>
        <dbReference type="ChEBI" id="CHEBI:456216"/>
        <dbReference type="EC" id="6.3.2.9"/>
    </reaction>
</comment>
<comment type="pathway">
    <text evidence="1">Cell wall biogenesis; peptidoglycan biosynthesis.</text>
</comment>
<comment type="subcellular location">
    <subcellularLocation>
        <location evidence="1">Cytoplasm</location>
    </subcellularLocation>
</comment>
<comment type="similarity">
    <text evidence="1">Belongs to the MurCDEF family.</text>
</comment>
<comment type="sequence caution" evidence="2">
    <conflict type="erroneous initiation">
        <sequence resource="EMBL-CDS" id="ACP10507"/>
    </conflict>
</comment>
<reference key="1">
    <citation type="submission" date="2007-03" db="EMBL/GenBank/DDBJ databases">
        <authorList>
            <person name="Heidelberg J."/>
        </authorList>
    </citation>
    <scope>NUCLEOTIDE SEQUENCE [LARGE SCALE GENOMIC DNA]</scope>
    <source>
        <strain>ATCC 39541 / Classical Ogawa 395 / O395</strain>
    </source>
</reference>
<reference key="2">
    <citation type="journal article" date="2008" name="PLoS ONE">
        <title>A recalibrated molecular clock and independent origins for the cholera pandemic clones.</title>
        <authorList>
            <person name="Feng L."/>
            <person name="Reeves P.R."/>
            <person name="Lan R."/>
            <person name="Ren Y."/>
            <person name="Gao C."/>
            <person name="Zhou Z."/>
            <person name="Ren Y."/>
            <person name="Cheng J."/>
            <person name="Wang W."/>
            <person name="Wang J."/>
            <person name="Qian W."/>
            <person name="Li D."/>
            <person name="Wang L."/>
        </authorList>
    </citation>
    <scope>NUCLEOTIDE SEQUENCE [LARGE SCALE GENOMIC DNA]</scope>
    <source>
        <strain>ATCC 39541 / Classical Ogawa 395 / O395</strain>
    </source>
</reference>